<name>RS4_DEHMC</name>
<keyword id="KW-0687">Ribonucleoprotein</keyword>
<keyword id="KW-0689">Ribosomal protein</keyword>
<keyword id="KW-0694">RNA-binding</keyword>
<keyword id="KW-0699">rRNA-binding</keyword>
<reference key="1">
    <citation type="journal article" date="2005" name="Nat. Biotechnol.">
        <title>Genome sequence of the chlorinated compound-respiring bacterium Dehalococcoides species strain CBDB1.</title>
        <authorList>
            <person name="Kube M."/>
            <person name="Beck A."/>
            <person name="Zinder S.H."/>
            <person name="Kuhl H."/>
            <person name="Reinhardt R."/>
            <person name="Adrian L."/>
        </authorList>
    </citation>
    <scope>NUCLEOTIDE SEQUENCE [LARGE SCALE GENOMIC DNA]</scope>
    <source>
        <strain>CBDB1</strain>
    </source>
</reference>
<feature type="chain" id="PRO_0000228893" description="Small ribosomal subunit protein uS4">
    <location>
        <begin position="1"/>
        <end position="207"/>
    </location>
</feature>
<feature type="domain" description="S4 RNA-binding" evidence="1">
    <location>
        <begin position="97"/>
        <end position="163"/>
    </location>
</feature>
<feature type="region of interest" description="Disordered" evidence="2">
    <location>
        <begin position="35"/>
        <end position="54"/>
    </location>
</feature>
<evidence type="ECO:0000255" key="1">
    <source>
        <dbReference type="HAMAP-Rule" id="MF_01306"/>
    </source>
</evidence>
<evidence type="ECO:0000256" key="2">
    <source>
        <dbReference type="SAM" id="MobiDB-lite"/>
    </source>
</evidence>
<evidence type="ECO:0000305" key="3"/>
<sequence>MSRETGAVCRMCRRSGDKLFLKGDKCVTKCVFEKRPKPPGPQLGRPRRLSDRGQQLRQKQSIRWSYGMTERQFRRFFGLANAQPGVTGDNMMILLERRLDNVLFRLGFGTSRAQARQIVMHGHILVNGQKTDIPSYLIKEGQEITVRETSKATAYFKTLAENIEAKAIPGWLSLDRKTLSGKVISLPNAGDIDARFDAQTVVEYYSR</sequence>
<accession>Q3ZZP7</accession>
<proteinExistence type="inferred from homology"/>
<protein>
    <recommendedName>
        <fullName evidence="1">Small ribosomal subunit protein uS4</fullName>
    </recommendedName>
    <alternativeName>
        <fullName evidence="3">30S ribosomal protein S4</fullName>
    </alternativeName>
</protein>
<comment type="function">
    <text evidence="1">One of the primary rRNA binding proteins, it binds directly to 16S rRNA where it nucleates assembly of the body of the 30S subunit.</text>
</comment>
<comment type="function">
    <text evidence="1">With S5 and S12 plays an important role in translational accuracy.</text>
</comment>
<comment type="subunit">
    <text evidence="1">Part of the 30S ribosomal subunit. Contacts protein S5. The interaction surface between S4 and S5 is involved in control of translational fidelity.</text>
</comment>
<comment type="similarity">
    <text evidence="1">Belongs to the universal ribosomal protein uS4 family.</text>
</comment>
<organism>
    <name type="scientific">Dehalococcoides mccartyi (strain CBDB1)</name>
    <dbReference type="NCBI Taxonomy" id="255470"/>
    <lineage>
        <taxon>Bacteria</taxon>
        <taxon>Bacillati</taxon>
        <taxon>Chloroflexota</taxon>
        <taxon>Dehalococcoidia</taxon>
        <taxon>Dehalococcoidales</taxon>
        <taxon>Dehalococcoidaceae</taxon>
        <taxon>Dehalococcoides</taxon>
    </lineage>
</organism>
<dbReference type="EMBL" id="AJ965256">
    <property type="protein sequence ID" value="CAI82666.1"/>
    <property type="molecule type" value="Genomic_DNA"/>
</dbReference>
<dbReference type="RefSeq" id="WP_011309019.1">
    <property type="nucleotide sequence ID" value="NC_007356.1"/>
</dbReference>
<dbReference type="SMR" id="Q3ZZP7"/>
<dbReference type="KEGG" id="deh:cbdbA465"/>
<dbReference type="HOGENOM" id="CLU_092403_0_2_0"/>
<dbReference type="Proteomes" id="UP000000433">
    <property type="component" value="Chromosome"/>
</dbReference>
<dbReference type="GO" id="GO:0015935">
    <property type="term" value="C:small ribosomal subunit"/>
    <property type="evidence" value="ECO:0007669"/>
    <property type="project" value="InterPro"/>
</dbReference>
<dbReference type="GO" id="GO:0019843">
    <property type="term" value="F:rRNA binding"/>
    <property type="evidence" value="ECO:0007669"/>
    <property type="project" value="UniProtKB-UniRule"/>
</dbReference>
<dbReference type="GO" id="GO:0003735">
    <property type="term" value="F:structural constituent of ribosome"/>
    <property type="evidence" value="ECO:0007669"/>
    <property type="project" value="InterPro"/>
</dbReference>
<dbReference type="GO" id="GO:0042274">
    <property type="term" value="P:ribosomal small subunit biogenesis"/>
    <property type="evidence" value="ECO:0007669"/>
    <property type="project" value="TreeGrafter"/>
</dbReference>
<dbReference type="GO" id="GO:0006412">
    <property type="term" value="P:translation"/>
    <property type="evidence" value="ECO:0007669"/>
    <property type="project" value="UniProtKB-UniRule"/>
</dbReference>
<dbReference type="CDD" id="cd00165">
    <property type="entry name" value="S4"/>
    <property type="match status" value="1"/>
</dbReference>
<dbReference type="FunFam" id="3.10.290.10:FF:000001">
    <property type="entry name" value="30S ribosomal protein S4"/>
    <property type="match status" value="1"/>
</dbReference>
<dbReference type="Gene3D" id="1.10.1050.10">
    <property type="entry name" value="Ribosomal Protein S4 Delta 41, Chain A, domain 1"/>
    <property type="match status" value="1"/>
</dbReference>
<dbReference type="Gene3D" id="3.10.290.10">
    <property type="entry name" value="RNA-binding S4 domain"/>
    <property type="match status" value="1"/>
</dbReference>
<dbReference type="HAMAP" id="MF_01306_B">
    <property type="entry name" value="Ribosomal_uS4_B"/>
    <property type="match status" value="1"/>
</dbReference>
<dbReference type="InterPro" id="IPR022801">
    <property type="entry name" value="Ribosomal_uS4"/>
</dbReference>
<dbReference type="InterPro" id="IPR005709">
    <property type="entry name" value="Ribosomal_uS4_bac-type"/>
</dbReference>
<dbReference type="InterPro" id="IPR018079">
    <property type="entry name" value="Ribosomal_uS4_CS"/>
</dbReference>
<dbReference type="InterPro" id="IPR001912">
    <property type="entry name" value="Ribosomal_uS4_N"/>
</dbReference>
<dbReference type="InterPro" id="IPR002942">
    <property type="entry name" value="S4_RNA-bd"/>
</dbReference>
<dbReference type="InterPro" id="IPR036986">
    <property type="entry name" value="S4_RNA-bd_sf"/>
</dbReference>
<dbReference type="NCBIfam" id="NF003717">
    <property type="entry name" value="PRK05327.1"/>
    <property type="match status" value="1"/>
</dbReference>
<dbReference type="NCBIfam" id="TIGR01017">
    <property type="entry name" value="rpsD_bact"/>
    <property type="match status" value="1"/>
</dbReference>
<dbReference type="PANTHER" id="PTHR11831">
    <property type="entry name" value="30S 40S RIBOSOMAL PROTEIN"/>
    <property type="match status" value="1"/>
</dbReference>
<dbReference type="PANTHER" id="PTHR11831:SF4">
    <property type="entry name" value="SMALL RIBOSOMAL SUBUNIT PROTEIN US4M"/>
    <property type="match status" value="1"/>
</dbReference>
<dbReference type="Pfam" id="PF00163">
    <property type="entry name" value="Ribosomal_S4"/>
    <property type="match status" value="1"/>
</dbReference>
<dbReference type="Pfam" id="PF01479">
    <property type="entry name" value="S4"/>
    <property type="match status" value="1"/>
</dbReference>
<dbReference type="SMART" id="SM01390">
    <property type="entry name" value="Ribosomal_S4"/>
    <property type="match status" value="1"/>
</dbReference>
<dbReference type="SMART" id="SM00363">
    <property type="entry name" value="S4"/>
    <property type="match status" value="1"/>
</dbReference>
<dbReference type="SUPFAM" id="SSF55174">
    <property type="entry name" value="Alpha-L RNA-binding motif"/>
    <property type="match status" value="1"/>
</dbReference>
<dbReference type="PROSITE" id="PS00632">
    <property type="entry name" value="RIBOSOMAL_S4"/>
    <property type="match status" value="1"/>
</dbReference>
<dbReference type="PROSITE" id="PS50889">
    <property type="entry name" value="S4"/>
    <property type="match status" value="1"/>
</dbReference>
<gene>
    <name evidence="1" type="primary">rpsD</name>
    <name type="ordered locus">cbdbA465</name>
</gene>